<protein>
    <recommendedName>
        <fullName evidence="1">UPF0346 protein lp_1865</fullName>
    </recommendedName>
</protein>
<comment type="similarity">
    <text evidence="1">Belongs to the UPF0346 family.</text>
</comment>
<feature type="chain" id="PRO_0000164276" description="UPF0346 protein lp_1865">
    <location>
        <begin position="1"/>
        <end position="73"/>
    </location>
</feature>
<dbReference type="EMBL" id="AL935263">
    <property type="protein sequence ID" value="CCC79134.1"/>
    <property type="molecule type" value="Genomic_DNA"/>
</dbReference>
<dbReference type="RefSeq" id="WP_003640574.1">
    <property type="nucleotide sequence ID" value="NC_004567.2"/>
</dbReference>
<dbReference type="RefSeq" id="YP_004889648.1">
    <property type="nucleotide sequence ID" value="NC_004567.2"/>
</dbReference>
<dbReference type="SMR" id="Q88W10"/>
<dbReference type="STRING" id="220668.lp_1865"/>
<dbReference type="EnsemblBacteria" id="CCC79134">
    <property type="protein sequence ID" value="CCC79134"/>
    <property type="gene ID" value="lp_1865"/>
</dbReference>
<dbReference type="KEGG" id="lpl:lp_1865"/>
<dbReference type="PATRIC" id="fig|220668.9.peg.1571"/>
<dbReference type="eggNOG" id="COG4479">
    <property type="taxonomic scope" value="Bacteria"/>
</dbReference>
<dbReference type="HOGENOM" id="CLU_177534_1_0_9"/>
<dbReference type="OrthoDB" id="2242851at2"/>
<dbReference type="PhylomeDB" id="Q88W10"/>
<dbReference type="Proteomes" id="UP000000432">
    <property type="component" value="Chromosome"/>
</dbReference>
<dbReference type="Gene3D" id="1.10.150.260">
    <property type="entry name" value="YozE SAM-like"/>
    <property type="match status" value="1"/>
</dbReference>
<dbReference type="HAMAP" id="MF_01538">
    <property type="entry name" value="UPF0346"/>
    <property type="match status" value="1"/>
</dbReference>
<dbReference type="InterPro" id="IPR010673">
    <property type="entry name" value="UPF0346"/>
</dbReference>
<dbReference type="InterPro" id="IPR023089">
    <property type="entry name" value="YozE_SAM-like"/>
</dbReference>
<dbReference type="InterPro" id="IPR036806">
    <property type="entry name" value="YozE_SAM-like_sf"/>
</dbReference>
<dbReference type="NCBIfam" id="NF010193">
    <property type="entry name" value="PRK13672.1"/>
    <property type="match status" value="1"/>
</dbReference>
<dbReference type="Pfam" id="PF06855">
    <property type="entry name" value="YozE_SAM_like"/>
    <property type="match status" value="1"/>
</dbReference>
<dbReference type="PIRSF" id="PIRSF037262">
    <property type="entry name" value="UCP037262"/>
    <property type="match status" value="1"/>
</dbReference>
<dbReference type="SUPFAM" id="SSF140652">
    <property type="entry name" value="YozE-like"/>
    <property type="match status" value="1"/>
</dbReference>
<organism>
    <name type="scientific">Lactiplantibacillus plantarum (strain ATCC BAA-793 / NCIMB 8826 / WCFS1)</name>
    <name type="common">Lactobacillus plantarum</name>
    <dbReference type="NCBI Taxonomy" id="220668"/>
    <lineage>
        <taxon>Bacteria</taxon>
        <taxon>Bacillati</taxon>
        <taxon>Bacillota</taxon>
        <taxon>Bacilli</taxon>
        <taxon>Lactobacillales</taxon>
        <taxon>Lactobacillaceae</taxon>
        <taxon>Lactiplantibacillus</taxon>
    </lineage>
</organism>
<proteinExistence type="inferred from homology"/>
<keyword id="KW-1185">Reference proteome</keyword>
<sequence>MHKTFYTFLMTQRNPDSTDAIAEFANNAFLDQSFPKQSKDFHELSQYLELNAGYLPTMTVFDDAWQAYLASEA</sequence>
<accession>Q88W10</accession>
<accession>F9UPJ5</accession>
<evidence type="ECO:0000255" key="1">
    <source>
        <dbReference type="HAMAP-Rule" id="MF_01538"/>
    </source>
</evidence>
<name>Y1865_LACPL</name>
<gene>
    <name type="ordered locus">lp_1865</name>
</gene>
<reference key="1">
    <citation type="journal article" date="2003" name="Proc. Natl. Acad. Sci. U.S.A.">
        <title>Complete genome sequence of Lactobacillus plantarum WCFS1.</title>
        <authorList>
            <person name="Kleerebezem M."/>
            <person name="Boekhorst J."/>
            <person name="van Kranenburg R."/>
            <person name="Molenaar D."/>
            <person name="Kuipers O.P."/>
            <person name="Leer R."/>
            <person name="Tarchini R."/>
            <person name="Peters S.A."/>
            <person name="Sandbrink H.M."/>
            <person name="Fiers M.W.E.J."/>
            <person name="Stiekema W."/>
            <person name="Klein Lankhorst R.M."/>
            <person name="Bron P.A."/>
            <person name="Hoffer S.M."/>
            <person name="Nierop Groot M.N."/>
            <person name="Kerkhoven R."/>
            <person name="De Vries M."/>
            <person name="Ursing B."/>
            <person name="De Vos W.M."/>
            <person name="Siezen R.J."/>
        </authorList>
    </citation>
    <scope>NUCLEOTIDE SEQUENCE [LARGE SCALE GENOMIC DNA]</scope>
    <source>
        <strain>ATCC BAA-793 / NCIMB 8826 / WCFS1</strain>
    </source>
</reference>
<reference key="2">
    <citation type="journal article" date="2012" name="J. Bacteriol.">
        <title>Complete resequencing and reannotation of the Lactobacillus plantarum WCFS1 genome.</title>
        <authorList>
            <person name="Siezen R.J."/>
            <person name="Francke C."/>
            <person name="Renckens B."/>
            <person name="Boekhorst J."/>
            <person name="Wels M."/>
            <person name="Kleerebezem M."/>
            <person name="van Hijum S.A."/>
        </authorList>
    </citation>
    <scope>NUCLEOTIDE SEQUENCE [LARGE SCALE GENOMIC DNA]</scope>
    <scope>GENOME REANNOTATION</scope>
    <source>
        <strain>ATCC BAA-793 / NCIMB 8826 / WCFS1</strain>
    </source>
</reference>